<sequence length="274" mass="29265">MSVQSTIRRKTAPDIRARKGGDPIVMLTSYHAHTASLVDRYCDAILVGDSLGNVMHGFETTVPVTLEMMILQGHAVMRGSQHALVVVDMPFGSYEASKEQAFHSAARILKETHCGAVKLEGGVRMAETIRFLTERGIPVMGHIGLTPQSINTLGSFRAQGREEGSWEPIEADAKAVAEAGAFSVVVEAVAEPLGRKITETIAIPTIGIGASAACDGQVLVLEDMLGLSPKPPKFVKRYGDLGPGIEAAIKGYAEEVRSRAFPGPEHVYGMKSKA</sequence>
<name>PANB_RHOPT</name>
<dbReference type="EC" id="2.1.2.11" evidence="1"/>
<dbReference type="EMBL" id="CP001096">
    <property type="protein sequence ID" value="ACF02009.1"/>
    <property type="molecule type" value="Genomic_DNA"/>
</dbReference>
<dbReference type="RefSeq" id="WP_012496540.1">
    <property type="nucleotide sequence ID" value="NC_011004.1"/>
</dbReference>
<dbReference type="SMR" id="B3Q9V6"/>
<dbReference type="KEGG" id="rpt:Rpal_3508"/>
<dbReference type="HOGENOM" id="CLU_036645_1_0_5"/>
<dbReference type="OrthoDB" id="9781789at2"/>
<dbReference type="UniPathway" id="UPA00028">
    <property type="reaction ID" value="UER00003"/>
</dbReference>
<dbReference type="Proteomes" id="UP000001725">
    <property type="component" value="Chromosome"/>
</dbReference>
<dbReference type="GO" id="GO:0005737">
    <property type="term" value="C:cytoplasm"/>
    <property type="evidence" value="ECO:0007669"/>
    <property type="project" value="UniProtKB-SubCell"/>
</dbReference>
<dbReference type="GO" id="GO:0003864">
    <property type="term" value="F:3-methyl-2-oxobutanoate hydroxymethyltransferase activity"/>
    <property type="evidence" value="ECO:0007669"/>
    <property type="project" value="UniProtKB-UniRule"/>
</dbReference>
<dbReference type="GO" id="GO:0000287">
    <property type="term" value="F:magnesium ion binding"/>
    <property type="evidence" value="ECO:0007669"/>
    <property type="project" value="TreeGrafter"/>
</dbReference>
<dbReference type="GO" id="GO:0015940">
    <property type="term" value="P:pantothenate biosynthetic process"/>
    <property type="evidence" value="ECO:0007669"/>
    <property type="project" value="UniProtKB-UniRule"/>
</dbReference>
<dbReference type="CDD" id="cd06557">
    <property type="entry name" value="KPHMT-like"/>
    <property type="match status" value="1"/>
</dbReference>
<dbReference type="FunFam" id="3.20.20.60:FF:000003">
    <property type="entry name" value="3-methyl-2-oxobutanoate hydroxymethyltransferase"/>
    <property type="match status" value="1"/>
</dbReference>
<dbReference type="Gene3D" id="3.20.20.60">
    <property type="entry name" value="Phosphoenolpyruvate-binding domains"/>
    <property type="match status" value="1"/>
</dbReference>
<dbReference type="HAMAP" id="MF_00156">
    <property type="entry name" value="PanB"/>
    <property type="match status" value="1"/>
</dbReference>
<dbReference type="InterPro" id="IPR003700">
    <property type="entry name" value="Pantoate_hydroxy_MeTrfase"/>
</dbReference>
<dbReference type="InterPro" id="IPR015813">
    <property type="entry name" value="Pyrv/PenolPyrv_kinase-like_dom"/>
</dbReference>
<dbReference type="InterPro" id="IPR040442">
    <property type="entry name" value="Pyrv_kinase-like_dom_sf"/>
</dbReference>
<dbReference type="NCBIfam" id="TIGR00222">
    <property type="entry name" value="panB"/>
    <property type="match status" value="1"/>
</dbReference>
<dbReference type="NCBIfam" id="NF001452">
    <property type="entry name" value="PRK00311.1"/>
    <property type="match status" value="1"/>
</dbReference>
<dbReference type="PANTHER" id="PTHR20881">
    <property type="entry name" value="3-METHYL-2-OXOBUTANOATE HYDROXYMETHYLTRANSFERASE"/>
    <property type="match status" value="1"/>
</dbReference>
<dbReference type="PANTHER" id="PTHR20881:SF0">
    <property type="entry name" value="3-METHYL-2-OXOBUTANOATE HYDROXYMETHYLTRANSFERASE"/>
    <property type="match status" value="1"/>
</dbReference>
<dbReference type="Pfam" id="PF02548">
    <property type="entry name" value="Pantoate_transf"/>
    <property type="match status" value="1"/>
</dbReference>
<dbReference type="PIRSF" id="PIRSF000388">
    <property type="entry name" value="Pantoate_hydroxy_MeTrfase"/>
    <property type="match status" value="1"/>
</dbReference>
<dbReference type="SUPFAM" id="SSF51621">
    <property type="entry name" value="Phosphoenolpyruvate/pyruvate domain"/>
    <property type="match status" value="1"/>
</dbReference>
<organism>
    <name type="scientific">Rhodopseudomonas palustris (strain TIE-1)</name>
    <dbReference type="NCBI Taxonomy" id="395960"/>
    <lineage>
        <taxon>Bacteria</taxon>
        <taxon>Pseudomonadati</taxon>
        <taxon>Pseudomonadota</taxon>
        <taxon>Alphaproteobacteria</taxon>
        <taxon>Hyphomicrobiales</taxon>
        <taxon>Nitrobacteraceae</taxon>
        <taxon>Rhodopseudomonas</taxon>
    </lineage>
</organism>
<proteinExistence type="inferred from homology"/>
<reference key="1">
    <citation type="submission" date="2008-05" db="EMBL/GenBank/DDBJ databases">
        <title>Complete sequence of Rhodopseudomonas palustris TIE-1.</title>
        <authorList>
            <consortium name="US DOE Joint Genome Institute"/>
            <person name="Lucas S."/>
            <person name="Copeland A."/>
            <person name="Lapidus A."/>
            <person name="Glavina del Rio T."/>
            <person name="Dalin E."/>
            <person name="Tice H."/>
            <person name="Pitluck S."/>
            <person name="Chain P."/>
            <person name="Malfatti S."/>
            <person name="Shin M."/>
            <person name="Vergez L."/>
            <person name="Lang D."/>
            <person name="Schmutz J."/>
            <person name="Larimer F."/>
            <person name="Land M."/>
            <person name="Hauser L."/>
            <person name="Kyrpides N."/>
            <person name="Mikhailova N."/>
            <person name="Emerson D."/>
            <person name="Newman D.K."/>
            <person name="Roden E."/>
            <person name="Richardson P."/>
        </authorList>
    </citation>
    <scope>NUCLEOTIDE SEQUENCE [LARGE SCALE GENOMIC DNA]</scope>
    <source>
        <strain>TIE-1</strain>
    </source>
</reference>
<gene>
    <name evidence="1" type="primary">panB</name>
    <name type="ordered locus">Rpal_3508</name>
</gene>
<accession>B3Q9V6</accession>
<protein>
    <recommendedName>
        <fullName evidence="1">3-methyl-2-oxobutanoate hydroxymethyltransferase</fullName>
        <ecNumber evidence="1">2.1.2.11</ecNumber>
    </recommendedName>
    <alternativeName>
        <fullName evidence="1">Ketopantoate hydroxymethyltransferase</fullName>
        <shortName evidence="1">KPHMT</shortName>
    </alternativeName>
</protein>
<comment type="function">
    <text evidence="1">Catalyzes the reversible reaction in which hydroxymethyl group from 5,10-methylenetetrahydrofolate is transferred onto alpha-ketoisovalerate to form ketopantoate.</text>
</comment>
<comment type="catalytic activity">
    <reaction evidence="1">
        <text>3-methyl-2-oxobutanoate + (6R)-5,10-methylene-5,6,7,8-tetrahydrofolate + H2O = 2-dehydropantoate + (6S)-5,6,7,8-tetrahydrofolate</text>
        <dbReference type="Rhea" id="RHEA:11824"/>
        <dbReference type="ChEBI" id="CHEBI:11561"/>
        <dbReference type="ChEBI" id="CHEBI:11851"/>
        <dbReference type="ChEBI" id="CHEBI:15377"/>
        <dbReference type="ChEBI" id="CHEBI:15636"/>
        <dbReference type="ChEBI" id="CHEBI:57453"/>
        <dbReference type="EC" id="2.1.2.11"/>
    </reaction>
</comment>
<comment type="cofactor">
    <cofactor evidence="1">
        <name>Mg(2+)</name>
        <dbReference type="ChEBI" id="CHEBI:18420"/>
    </cofactor>
    <text evidence="1">Binds 1 Mg(2+) ion per subunit.</text>
</comment>
<comment type="pathway">
    <text evidence="1">Cofactor biosynthesis; (R)-pantothenate biosynthesis; (R)-pantoate from 3-methyl-2-oxobutanoate: step 1/2.</text>
</comment>
<comment type="subunit">
    <text evidence="1">Homodecamer; pentamer of dimers.</text>
</comment>
<comment type="subcellular location">
    <subcellularLocation>
        <location evidence="1">Cytoplasm</location>
    </subcellularLocation>
</comment>
<comment type="similarity">
    <text evidence="1">Belongs to the PanB family.</text>
</comment>
<feature type="chain" id="PRO_1000096997" description="3-methyl-2-oxobutanoate hydroxymethyltransferase">
    <location>
        <begin position="1"/>
        <end position="274"/>
    </location>
</feature>
<feature type="active site" description="Proton acceptor" evidence="1">
    <location>
        <position position="187"/>
    </location>
</feature>
<feature type="binding site" evidence="1">
    <location>
        <begin position="49"/>
        <end position="50"/>
    </location>
    <ligand>
        <name>3-methyl-2-oxobutanoate</name>
        <dbReference type="ChEBI" id="CHEBI:11851"/>
    </ligand>
</feature>
<feature type="binding site" evidence="1">
    <location>
        <position position="49"/>
    </location>
    <ligand>
        <name>Mg(2+)</name>
        <dbReference type="ChEBI" id="CHEBI:18420"/>
    </ligand>
</feature>
<feature type="binding site" evidence="1">
    <location>
        <position position="88"/>
    </location>
    <ligand>
        <name>3-methyl-2-oxobutanoate</name>
        <dbReference type="ChEBI" id="CHEBI:11851"/>
    </ligand>
</feature>
<feature type="binding site" evidence="1">
    <location>
        <position position="88"/>
    </location>
    <ligand>
        <name>Mg(2+)</name>
        <dbReference type="ChEBI" id="CHEBI:18420"/>
    </ligand>
</feature>
<feature type="binding site" evidence="1">
    <location>
        <position position="118"/>
    </location>
    <ligand>
        <name>3-methyl-2-oxobutanoate</name>
        <dbReference type="ChEBI" id="CHEBI:11851"/>
    </ligand>
</feature>
<feature type="binding site" evidence="1">
    <location>
        <position position="120"/>
    </location>
    <ligand>
        <name>Mg(2+)</name>
        <dbReference type="ChEBI" id="CHEBI:18420"/>
    </ligand>
</feature>
<evidence type="ECO:0000255" key="1">
    <source>
        <dbReference type="HAMAP-Rule" id="MF_00156"/>
    </source>
</evidence>
<keyword id="KW-0963">Cytoplasm</keyword>
<keyword id="KW-0460">Magnesium</keyword>
<keyword id="KW-0479">Metal-binding</keyword>
<keyword id="KW-0566">Pantothenate biosynthesis</keyword>
<keyword id="KW-0808">Transferase</keyword>